<dbReference type="EC" id="6.3.1.13" evidence="1"/>
<dbReference type="EMBL" id="CP000750">
    <property type="protein sequence ID" value="ABS03322.1"/>
    <property type="molecule type" value="Genomic_DNA"/>
</dbReference>
<dbReference type="RefSeq" id="WP_011981539.1">
    <property type="nucleotide sequence ID" value="NC_009664.2"/>
</dbReference>
<dbReference type="SMR" id="A6W933"/>
<dbReference type="STRING" id="266940.Krad_1836"/>
<dbReference type="KEGG" id="kra:Krad_1836"/>
<dbReference type="eggNOG" id="COG0215">
    <property type="taxonomic scope" value="Bacteria"/>
</dbReference>
<dbReference type="HOGENOM" id="CLU_013528_0_0_11"/>
<dbReference type="OrthoDB" id="9815130at2"/>
<dbReference type="Proteomes" id="UP000001116">
    <property type="component" value="Chromosome"/>
</dbReference>
<dbReference type="GO" id="GO:0005829">
    <property type="term" value="C:cytosol"/>
    <property type="evidence" value="ECO:0007669"/>
    <property type="project" value="TreeGrafter"/>
</dbReference>
<dbReference type="GO" id="GO:0005524">
    <property type="term" value="F:ATP binding"/>
    <property type="evidence" value="ECO:0007669"/>
    <property type="project" value="UniProtKB-KW"/>
</dbReference>
<dbReference type="GO" id="GO:0035446">
    <property type="term" value="F:cysteine-glucosaminylinositol ligase activity"/>
    <property type="evidence" value="ECO:0007669"/>
    <property type="project" value="UniProtKB-UniRule"/>
</dbReference>
<dbReference type="GO" id="GO:0004817">
    <property type="term" value="F:cysteine-tRNA ligase activity"/>
    <property type="evidence" value="ECO:0007669"/>
    <property type="project" value="TreeGrafter"/>
</dbReference>
<dbReference type="GO" id="GO:0008270">
    <property type="term" value="F:zinc ion binding"/>
    <property type="evidence" value="ECO:0007669"/>
    <property type="project" value="UniProtKB-UniRule"/>
</dbReference>
<dbReference type="GO" id="GO:0006423">
    <property type="term" value="P:cysteinyl-tRNA aminoacylation"/>
    <property type="evidence" value="ECO:0007669"/>
    <property type="project" value="TreeGrafter"/>
</dbReference>
<dbReference type="GO" id="GO:0010125">
    <property type="term" value="P:mycothiol biosynthetic process"/>
    <property type="evidence" value="ECO:0007669"/>
    <property type="project" value="UniProtKB-UniRule"/>
</dbReference>
<dbReference type="Gene3D" id="1.20.120.640">
    <property type="entry name" value="Anticodon-binding domain of a subclass of class I aminoacyl-tRNA synthetases"/>
    <property type="match status" value="1"/>
</dbReference>
<dbReference type="Gene3D" id="3.40.50.620">
    <property type="entry name" value="HUPs"/>
    <property type="match status" value="1"/>
</dbReference>
<dbReference type="HAMAP" id="MF_01697">
    <property type="entry name" value="MshC"/>
    <property type="match status" value="1"/>
</dbReference>
<dbReference type="InterPro" id="IPR024909">
    <property type="entry name" value="Cys-tRNA/MSH_ligase"/>
</dbReference>
<dbReference type="InterPro" id="IPR017812">
    <property type="entry name" value="Mycothiol_ligase_MshC"/>
</dbReference>
<dbReference type="InterPro" id="IPR014729">
    <property type="entry name" value="Rossmann-like_a/b/a_fold"/>
</dbReference>
<dbReference type="InterPro" id="IPR032678">
    <property type="entry name" value="tRNA-synt_1_cat_dom"/>
</dbReference>
<dbReference type="NCBIfam" id="TIGR03447">
    <property type="entry name" value="mycothiol_MshC"/>
    <property type="match status" value="1"/>
</dbReference>
<dbReference type="PANTHER" id="PTHR10890:SF3">
    <property type="entry name" value="CYSTEINE--TRNA LIGASE, CYTOPLASMIC"/>
    <property type="match status" value="1"/>
</dbReference>
<dbReference type="PANTHER" id="PTHR10890">
    <property type="entry name" value="CYSTEINYL-TRNA SYNTHETASE"/>
    <property type="match status" value="1"/>
</dbReference>
<dbReference type="Pfam" id="PF01406">
    <property type="entry name" value="tRNA-synt_1e"/>
    <property type="match status" value="1"/>
</dbReference>
<dbReference type="PRINTS" id="PR00983">
    <property type="entry name" value="TRNASYNTHCYS"/>
</dbReference>
<dbReference type="SUPFAM" id="SSF52374">
    <property type="entry name" value="Nucleotidylyl transferase"/>
    <property type="match status" value="1"/>
</dbReference>
<proteinExistence type="inferred from homology"/>
<accession>A6W933</accession>
<name>MSHC_KINRD</name>
<evidence type="ECO:0000255" key="1">
    <source>
        <dbReference type="HAMAP-Rule" id="MF_01697"/>
    </source>
</evidence>
<evidence type="ECO:0000256" key="2">
    <source>
        <dbReference type="SAM" id="MobiDB-lite"/>
    </source>
</evidence>
<comment type="function">
    <text evidence="1">Catalyzes the ATP-dependent condensation of GlcN-Ins and L-cysteine to form L-Cys-GlcN-Ins.</text>
</comment>
<comment type="catalytic activity">
    <reaction evidence="1">
        <text>1D-myo-inositol 2-amino-2-deoxy-alpha-D-glucopyranoside + L-cysteine + ATP = 1D-myo-inositol 2-(L-cysteinylamino)-2-deoxy-alpha-D-glucopyranoside + AMP + diphosphate + H(+)</text>
        <dbReference type="Rhea" id="RHEA:26176"/>
        <dbReference type="ChEBI" id="CHEBI:15378"/>
        <dbReference type="ChEBI" id="CHEBI:30616"/>
        <dbReference type="ChEBI" id="CHEBI:33019"/>
        <dbReference type="ChEBI" id="CHEBI:35235"/>
        <dbReference type="ChEBI" id="CHEBI:58886"/>
        <dbReference type="ChEBI" id="CHEBI:58887"/>
        <dbReference type="ChEBI" id="CHEBI:456215"/>
        <dbReference type="EC" id="6.3.1.13"/>
    </reaction>
</comment>
<comment type="cofactor">
    <cofactor evidence="1">
        <name>Zn(2+)</name>
        <dbReference type="ChEBI" id="CHEBI:29105"/>
    </cofactor>
    <text evidence="1">Binds 1 zinc ion per subunit.</text>
</comment>
<comment type="subunit">
    <text evidence="1">Monomer.</text>
</comment>
<comment type="similarity">
    <text evidence="1">Belongs to the class-I aminoacyl-tRNA synthetase family. MshC subfamily.</text>
</comment>
<reference key="1">
    <citation type="journal article" date="2008" name="PLoS ONE">
        <title>Survival in nuclear waste, extreme resistance, and potential applications gleaned from the genome sequence of Kineococcus radiotolerans SRS30216.</title>
        <authorList>
            <person name="Bagwell C.E."/>
            <person name="Bhat S."/>
            <person name="Hawkins G.M."/>
            <person name="Smith B.W."/>
            <person name="Biswas T."/>
            <person name="Hoover T.R."/>
            <person name="Saunders E."/>
            <person name="Han C.S."/>
            <person name="Tsodikov O.V."/>
            <person name="Shimkets L.J."/>
        </authorList>
    </citation>
    <scope>NUCLEOTIDE SEQUENCE [LARGE SCALE GENOMIC DNA]</scope>
    <source>
        <strain>ATCC BAA-149 / DSM 14245 / SRS30216</strain>
    </source>
</reference>
<protein>
    <recommendedName>
        <fullName evidence="1">L-cysteine:1D-myo-inositol 2-amino-2-deoxy-alpha-D-glucopyranoside ligase</fullName>
        <shortName evidence="1">L-Cys:GlcN-Ins ligase</shortName>
        <ecNumber evidence="1">6.3.1.13</ecNumber>
    </recommendedName>
    <alternativeName>
        <fullName evidence="1">Mycothiol ligase</fullName>
        <shortName evidence="1">MSH ligase</shortName>
    </alternativeName>
</protein>
<organism>
    <name type="scientific">Kineococcus radiotolerans (strain ATCC BAA-149 / DSM 14245 / SRS30216)</name>
    <dbReference type="NCBI Taxonomy" id="266940"/>
    <lineage>
        <taxon>Bacteria</taxon>
        <taxon>Bacillati</taxon>
        <taxon>Actinomycetota</taxon>
        <taxon>Actinomycetes</taxon>
        <taxon>Kineosporiales</taxon>
        <taxon>Kineosporiaceae</taxon>
        <taxon>Kineococcus</taxon>
    </lineage>
</organism>
<feature type="chain" id="PRO_0000400451" description="L-cysteine:1D-myo-inositol 2-amino-2-deoxy-alpha-D-glucopyranoside ligase">
    <location>
        <begin position="1"/>
        <end position="419"/>
    </location>
</feature>
<feature type="region of interest" description="Disordered" evidence="2">
    <location>
        <begin position="1"/>
        <end position="20"/>
    </location>
</feature>
<feature type="short sequence motif" description="'HIGH' region" evidence="1">
    <location>
        <begin position="46"/>
        <end position="56"/>
    </location>
</feature>
<feature type="short sequence motif" description="'ERGGDP' region" evidence="1">
    <location>
        <begin position="191"/>
        <end position="196"/>
    </location>
</feature>
<feature type="short sequence motif" description="'KMSKS' region" evidence="1">
    <location>
        <begin position="295"/>
        <end position="299"/>
    </location>
</feature>
<feature type="binding site" evidence="1">
    <location>
        <begin position="44"/>
        <end position="47"/>
    </location>
    <ligand>
        <name>L-cysteinyl-5'-AMP</name>
        <dbReference type="ChEBI" id="CHEBI:144924"/>
    </ligand>
</feature>
<feature type="binding site" evidence="1">
    <location>
        <position position="44"/>
    </location>
    <ligand>
        <name>Zn(2+)</name>
        <dbReference type="ChEBI" id="CHEBI:29105"/>
    </ligand>
</feature>
<feature type="binding site" evidence="1">
    <location>
        <position position="59"/>
    </location>
    <ligand>
        <name>L-cysteinyl-5'-AMP</name>
        <dbReference type="ChEBI" id="CHEBI:144924"/>
    </ligand>
</feature>
<feature type="binding site" evidence="1">
    <location>
        <begin position="82"/>
        <end position="84"/>
    </location>
    <ligand>
        <name>L-cysteinyl-5'-AMP</name>
        <dbReference type="ChEBI" id="CHEBI:144924"/>
    </ligand>
</feature>
<feature type="binding site" evidence="1">
    <location>
        <position position="232"/>
    </location>
    <ligand>
        <name>L-cysteinyl-5'-AMP</name>
        <dbReference type="ChEBI" id="CHEBI:144924"/>
    </ligand>
</feature>
<feature type="binding site" evidence="1">
    <location>
        <position position="236"/>
    </location>
    <ligand>
        <name>Zn(2+)</name>
        <dbReference type="ChEBI" id="CHEBI:29105"/>
    </ligand>
</feature>
<feature type="binding site" evidence="1">
    <location>
        <begin position="254"/>
        <end position="256"/>
    </location>
    <ligand>
        <name>L-cysteinyl-5'-AMP</name>
        <dbReference type="ChEBI" id="CHEBI:144924"/>
    </ligand>
</feature>
<feature type="binding site" evidence="1">
    <location>
        <position position="261"/>
    </location>
    <ligand>
        <name>Zn(2+)</name>
        <dbReference type="ChEBI" id="CHEBI:29105"/>
    </ligand>
</feature>
<feature type="binding site" evidence="1">
    <location>
        <position position="289"/>
    </location>
    <ligand>
        <name>L-cysteinyl-5'-AMP</name>
        <dbReference type="ChEBI" id="CHEBI:144924"/>
    </ligand>
</feature>
<sequence>MRSWSVPEVPALPGRGPRVHLHDTATGGLVPVGPEAGTATLYVCGITPYDATHLGHANTYVAFDLLGRAWRDAGLDVRYVQNVTDVDDPLLERAEATGVDWRDLAESQVELFRGDMEALSVVPPQRYLGVVEAVDLVAEAVRDLLAAGAAYRVPGTDGGPDGDVYFPVDADAAFGTVGGYDLETMLALSAERGGDPQRPGKRNPLDPLLWRVERPGEPAWEAGELGRGRPGWHIECTAIALEHLGMPIDVQAGGSDLVFPHHEMGAAHAHLLRPRARPFARAYAHSGMVALDGEKMSKSKGNLVLVSRLVAAGVPAAVVRLAIVDHHWRTDWEWTDEVLAQARARHERWSAAVAAPAGPPAEALLATVRERLADDLDAPGAVAAVDAWVEQARTTAGTDAQAPDLVRRTVSALLGVVLP</sequence>
<keyword id="KW-0067">ATP-binding</keyword>
<keyword id="KW-0436">Ligase</keyword>
<keyword id="KW-0479">Metal-binding</keyword>
<keyword id="KW-0547">Nucleotide-binding</keyword>
<keyword id="KW-1185">Reference proteome</keyword>
<keyword id="KW-0862">Zinc</keyword>
<gene>
    <name evidence="1" type="primary">mshC</name>
    <name type="ordered locus">Krad_1836</name>
</gene>